<gene>
    <name evidence="1" type="primary">moaC</name>
    <name type="ordered locus">Bcen_2027</name>
</gene>
<reference key="1">
    <citation type="submission" date="2006-05" db="EMBL/GenBank/DDBJ databases">
        <title>Complete sequence of chromosome 1 of Burkholderia cenocepacia AU 1054.</title>
        <authorList>
            <consortium name="US DOE Joint Genome Institute"/>
            <person name="Copeland A."/>
            <person name="Lucas S."/>
            <person name="Lapidus A."/>
            <person name="Barry K."/>
            <person name="Detter J.C."/>
            <person name="Glavina del Rio T."/>
            <person name="Hammon N."/>
            <person name="Israni S."/>
            <person name="Dalin E."/>
            <person name="Tice H."/>
            <person name="Pitluck S."/>
            <person name="Chain P."/>
            <person name="Malfatti S."/>
            <person name="Shin M."/>
            <person name="Vergez L."/>
            <person name="Schmutz J."/>
            <person name="Larimer F."/>
            <person name="Land M."/>
            <person name="Hauser L."/>
            <person name="Kyrpides N."/>
            <person name="Lykidis A."/>
            <person name="LiPuma J.J."/>
            <person name="Konstantinidis K."/>
            <person name="Tiedje J.M."/>
            <person name="Richardson P."/>
        </authorList>
    </citation>
    <scope>NUCLEOTIDE SEQUENCE [LARGE SCALE GENOMIC DNA]</scope>
    <source>
        <strain>AU 1054</strain>
    </source>
</reference>
<keyword id="KW-0456">Lyase</keyword>
<keyword id="KW-0501">Molybdenum cofactor biosynthesis</keyword>
<accession>Q1BTX7</accession>
<comment type="function">
    <text evidence="1">Catalyzes the conversion of (8S)-3',8-cyclo-7,8-dihydroguanosine 5'-triphosphate to cyclic pyranopterin monophosphate (cPMP).</text>
</comment>
<comment type="catalytic activity">
    <reaction evidence="1">
        <text>(8S)-3',8-cyclo-7,8-dihydroguanosine 5'-triphosphate = cyclic pyranopterin phosphate + diphosphate</text>
        <dbReference type="Rhea" id="RHEA:49580"/>
        <dbReference type="ChEBI" id="CHEBI:33019"/>
        <dbReference type="ChEBI" id="CHEBI:59648"/>
        <dbReference type="ChEBI" id="CHEBI:131766"/>
        <dbReference type="EC" id="4.6.1.17"/>
    </reaction>
</comment>
<comment type="pathway">
    <text evidence="1">Cofactor biosynthesis; molybdopterin biosynthesis.</text>
</comment>
<comment type="subunit">
    <text evidence="1">Homohexamer; trimer of dimers.</text>
</comment>
<comment type="similarity">
    <text evidence="1">Belongs to the MoaC family.</text>
</comment>
<proteinExistence type="inferred from homology"/>
<protein>
    <recommendedName>
        <fullName evidence="1">Cyclic pyranopterin monophosphate synthase</fullName>
        <ecNumber evidence="1">4.6.1.17</ecNumber>
    </recommendedName>
    <alternativeName>
        <fullName evidence="1">Molybdenum cofactor biosynthesis protein C</fullName>
    </alternativeName>
</protein>
<feature type="chain" id="PRO_1000054075" description="Cyclic pyranopterin monophosphate synthase">
    <location>
        <begin position="1"/>
        <end position="162"/>
    </location>
</feature>
<feature type="active site" evidence="1">
    <location>
        <position position="128"/>
    </location>
</feature>
<feature type="binding site" evidence="1">
    <location>
        <begin position="75"/>
        <end position="77"/>
    </location>
    <ligand>
        <name>substrate</name>
    </ligand>
</feature>
<feature type="binding site" evidence="1">
    <location>
        <begin position="113"/>
        <end position="114"/>
    </location>
    <ligand>
        <name>substrate</name>
    </ligand>
</feature>
<organism>
    <name type="scientific">Burkholderia orbicola (strain AU 1054)</name>
    <dbReference type="NCBI Taxonomy" id="331271"/>
    <lineage>
        <taxon>Bacteria</taxon>
        <taxon>Pseudomonadati</taxon>
        <taxon>Pseudomonadota</taxon>
        <taxon>Betaproteobacteria</taxon>
        <taxon>Burkholderiales</taxon>
        <taxon>Burkholderiaceae</taxon>
        <taxon>Burkholderia</taxon>
        <taxon>Burkholderia cepacia complex</taxon>
        <taxon>Burkholderia orbicola</taxon>
    </lineage>
</organism>
<evidence type="ECO:0000255" key="1">
    <source>
        <dbReference type="HAMAP-Rule" id="MF_01224"/>
    </source>
</evidence>
<sequence>MSGLTHFDAAGHAHMVDVGDKQETRRIAIARGTIRMLPATFALIRDGKAKKGDVLGVARIAAIQGAKRTADLIPLCHPLALTRVAVEFELDDALPGVHCVVQVETFGRTGVEMEALTAVQVGLLTVYDMCKAVDRGMVITDVSVREKRGGKSGDWKAEDAAG</sequence>
<dbReference type="EC" id="4.6.1.17" evidence="1"/>
<dbReference type="EMBL" id="CP000378">
    <property type="protein sequence ID" value="ABF76928.1"/>
    <property type="molecule type" value="Genomic_DNA"/>
</dbReference>
<dbReference type="SMR" id="Q1BTX7"/>
<dbReference type="HOGENOM" id="CLU_074693_1_1_4"/>
<dbReference type="UniPathway" id="UPA00344"/>
<dbReference type="GO" id="GO:0061799">
    <property type="term" value="F:cyclic pyranopterin monophosphate synthase activity"/>
    <property type="evidence" value="ECO:0007669"/>
    <property type="project" value="UniProtKB-UniRule"/>
</dbReference>
<dbReference type="GO" id="GO:0006777">
    <property type="term" value="P:Mo-molybdopterin cofactor biosynthetic process"/>
    <property type="evidence" value="ECO:0007669"/>
    <property type="project" value="UniProtKB-UniRule"/>
</dbReference>
<dbReference type="CDD" id="cd01420">
    <property type="entry name" value="MoaC_PE"/>
    <property type="match status" value="1"/>
</dbReference>
<dbReference type="Gene3D" id="3.30.70.640">
    <property type="entry name" value="Molybdopterin cofactor biosynthesis C (MoaC) domain"/>
    <property type="match status" value="1"/>
</dbReference>
<dbReference type="HAMAP" id="MF_01224_B">
    <property type="entry name" value="MoaC_B"/>
    <property type="match status" value="1"/>
</dbReference>
<dbReference type="InterPro" id="IPR023045">
    <property type="entry name" value="MoaC"/>
</dbReference>
<dbReference type="InterPro" id="IPR047594">
    <property type="entry name" value="MoaC_bact/euk"/>
</dbReference>
<dbReference type="InterPro" id="IPR036522">
    <property type="entry name" value="MoaC_sf"/>
</dbReference>
<dbReference type="InterPro" id="IPR050105">
    <property type="entry name" value="MoCo_biosynth_MoaA/MoaC"/>
</dbReference>
<dbReference type="InterPro" id="IPR002820">
    <property type="entry name" value="Mopterin_CF_biosynth-C_dom"/>
</dbReference>
<dbReference type="NCBIfam" id="TIGR00581">
    <property type="entry name" value="moaC"/>
    <property type="match status" value="1"/>
</dbReference>
<dbReference type="NCBIfam" id="NF006870">
    <property type="entry name" value="PRK09364.1"/>
    <property type="match status" value="1"/>
</dbReference>
<dbReference type="PANTHER" id="PTHR22960:SF29">
    <property type="entry name" value="CYCLIC PYRANOPTERIN MONOPHOSPHATE SYNTHASE"/>
    <property type="match status" value="1"/>
</dbReference>
<dbReference type="PANTHER" id="PTHR22960">
    <property type="entry name" value="MOLYBDOPTERIN COFACTOR SYNTHESIS PROTEIN A"/>
    <property type="match status" value="1"/>
</dbReference>
<dbReference type="Pfam" id="PF01967">
    <property type="entry name" value="MoaC"/>
    <property type="match status" value="1"/>
</dbReference>
<dbReference type="SUPFAM" id="SSF55040">
    <property type="entry name" value="Molybdenum cofactor biosynthesis protein C, MoaC"/>
    <property type="match status" value="1"/>
</dbReference>
<name>MOAC_BURO1</name>